<proteinExistence type="inferred from homology"/>
<evidence type="ECO:0000255" key="1">
    <source>
        <dbReference type="HAMAP-Rule" id="MF_01225"/>
    </source>
</evidence>
<evidence type="ECO:0000255" key="2">
    <source>
        <dbReference type="PROSITE-ProRule" id="PRU01266"/>
    </source>
</evidence>
<organism>
    <name type="scientific">Salmonella typhi</name>
    <dbReference type="NCBI Taxonomy" id="90370"/>
    <lineage>
        <taxon>Bacteria</taxon>
        <taxon>Pseudomonadati</taxon>
        <taxon>Pseudomonadota</taxon>
        <taxon>Gammaproteobacteria</taxon>
        <taxon>Enterobacterales</taxon>
        <taxon>Enterobacteriaceae</taxon>
        <taxon>Salmonella</taxon>
    </lineage>
</organism>
<reference key="1">
    <citation type="journal article" date="2001" name="Nature">
        <title>Complete genome sequence of a multiple drug resistant Salmonella enterica serovar Typhi CT18.</title>
        <authorList>
            <person name="Parkhill J."/>
            <person name="Dougan G."/>
            <person name="James K.D."/>
            <person name="Thomson N.R."/>
            <person name="Pickard D."/>
            <person name="Wain J."/>
            <person name="Churcher C.M."/>
            <person name="Mungall K.L."/>
            <person name="Bentley S.D."/>
            <person name="Holden M.T.G."/>
            <person name="Sebaihia M."/>
            <person name="Baker S."/>
            <person name="Basham D."/>
            <person name="Brooks K."/>
            <person name="Chillingworth T."/>
            <person name="Connerton P."/>
            <person name="Cronin A."/>
            <person name="Davis P."/>
            <person name="Davies R.M."/>
            <person name="Dowd L."/>
            <person name="White N."/>
            <person name="Farrar J."/>
            <person name="Feltwell T."/>
            <person name="Hamlin N."/>
            <person name="Haque A."/>
            <person name="Hien T.T."/>
            <person name="Holroyd S."/>
            <person name="Jagels K."/>
            <person name="Krogh A."/>
            <person name="Larsen T.S."/>
            <person name="Leather S."/>
            <person name="Moule S."/>
            <person name="O'Gaora P."/>
            <person name="Parry C."/>
            <person name="Quail M.A."/>
            <person name="Rutherford K.M."/>
            <person name="Simmonds M."/>
            <person name="Skelton J."/>
            <person name="Stevens K."/>
            <person name="Whitehead S."/>
            <person name="Barrell B.G."/>
        </authorList>
    </citation>
    <scope>NUCLEOTIDE SEQUENCE [LARGE SCALE GENOMIC DNA]</scope>
    <source>
        <strain>CT18</strain>
    </source>
</reference>
<reference key="2">
    <citation type="journal article" date="2003" name="J. Bacteriol.">
        <title>Comparative genomics of Salmonella enterica serovar Typhi strains Ty2 and CT18.</title>
        <authorList>
            <person name="Deng W."/>
            <person name="Liou S.-R."/>
            <person name="Plunkett G. III"/>
            <person name="Mayhew G.F."/>
            <person name="Rose D.J."/>
            <person name="Burland V."/>
            <person name="Kodoyianni V."/>
            <person name="Schwartz D.C."/>
            <person name="Blattner F.R."/>
        </authorList>
    </citation>
    <scope>NUCLEOTIDE SEQUENCE [LARGE SCALE GENOMIC DNA]</scope>
    <source>
        <strain>ATCC 700931 / Ty2</strain>
    </source>
</reference>
<feature type="chain" id="PRO_0000152989" description="GTP 3',8-cyclase">
    <location>
        <begin position="1"/>
        <end position="329"/>
    </location>
</feature>
<feature type="domain" description="Radical SAM core" evidence="2">
    <location>
        <begin position="8"/>
        <end position="234"/>
    </location>
</feature>
<feature type="binding site" evidence="1">
    <location>
        <position position="17"/>
    </location>
    <ligand>
        <name>GTP</name>
        <dbReference type="ChEBI" id="CHEBI:37565"/>
    </ligand>
</feature>
<feature type="binding site" evidence="1">
    <location>
        <position position="24"/>
    </location>
    <ligand>
        <name>[4Fe-4S] cluster</name>
        <dbReference type="ChEBI" id="CHEBI:49883"/>
        <label>1</label>
        <note>4Fe-4S-S-AdoMet</note>
    </ligand>
</feature>
<feature type="binding site" evidence="1">
    <location>
        <position position="28"/>
    </location>
    <ligand>
        <name>[4Fe-4S] cluster</name>
        <dbReference type="ChEBI" id="CHEBI:49883"/>
        <label>1</label>
        <note>4Fe-4S-S-AdoMet</note>
    </ligand>
</feature>
<feature type="binding site" evidence="1">
    <location>
        <position position="30"/>
    </location>
    <ligand>
        <name>S-adenosyl-L-methionine</name>
        <dbReference type="ChEBI" id="CHEBI:59789"/>
    </ligand>
</feature>
<feature type="binding site" evidence="1">
    <location>
        <position position="31"/>
    </location>
    <ligand>
        <name>[4Fe-4S] cluster</name>
        <dbReference type="ChEBI" id="CHEBI:49883"/>
        <label>1</label>
        <note>4Fe-4S-S-AdoMet</note>
    </ligand>
</feature>
<feature type="binding site" evidence="1">
    <location>
        <position position="68"/>
    </location>
    <ligand>
        <name>GTP</name>
        <dbReference type="ChEBI" id="CHEBI:37565"/>
    </ligand>
</feature>
<feature type="binding site" evidence="1">
    <location>
        <position position="72"/>
    </location>
    <ligand>
        <name>S-adenosyl-L-methionine</name>
        <dbReference type="ChEBI" id="CHEBI:59789"/>
    </ligand>
</feature>
<feature type="binding site" evidence="1">
    <location>
        <position position="99"/>
    </location>
    <ligand>
        <name>GTP</name>
        <dbReference type="ChEBI" id="CHEBI:37565"/>
    </ligand>
</feature>
<feature type="binding site" evidence="1">
    <location>
        <position position="123"/>
    </location>
    <ligand>
        <name>S-adenosyl-L-methionine</name>
        <dbReference type="ChEBI" id="CHEBI:59789"/>
    </ligand>
</feature>
<feature type="binding site" evidence="1">
    <location>
        <position position="160"/>
    </location>
    <ligand>
        <name>GTP</name>
        <dbReference type="ChEBI" id="CHEBI:37565"/>
    </ligand>
</feature>
<feature type="binding site" evidence="1">
    <location>
        <position position="194"/>
    </location>
    <ligand>
        <name>S-adenosyl-L-methionine</name>
        <dbReference type="ChEBI" id="CHEBI:59789"/>
    </ligand>
</feature>
<feature type="binding site" evidence="1">
    <location>
        <position position="257"/>
    </location>
    <ligand>
        <name>[4Fe-4S] cluster</name>
        <dbReference type="ChEBI" id="CHEBI:49883"/>
        <label>2</label>
        <note>4Fe-4S-substrate</note>
    </ligand>
</feature>
<feature type="binding site" evidence="1">
    <location>
        <position position="260"/>
    </location>
    <ligand>
        <name>[4Fe-4S] cluster</name>
        <dbReference type="ChEBI" id="CHEBI:49883"/>
        <label>2</label>
        <note>4Fe-4S-substrate</note>
    </ligand>
</feature>
<feature type="binding site" evidence="1">
    <location>
        <begin position="262"/>
        <end position="264"/>
    </location>
    <ligand>
        <name>GTP</name>
        <dbReference type="ChEBI" id="CHEBI:37565"/>
    </ligand>
</feature>
<feature type="binding site" evidence="1">
    <location>
        <position position="274"/>
    </location>
    <ligand>
        <name>[4Fe-4S] cluster</name>
        <dbReference type="ChEBI" id="CHEBI:49883"/>
        <label>2</label>
        <note>4Fe-4S-substrate</note>
    </ligand>
</feature>
<comment type="function">
    <text evidence="1">Catalyzes the cyclization of GTP to (8S)-3',8-cyclo-7,8-dihydroguanosine 5'-triphosphate.</text>
</comment>
<comment type="catalytic activity">
    <reaction evidence="1">
        <text>GTP + AH2 + S-adenosyl-L-methionine = (8S)-3',8-cyclo-7,8-dihydroguanosine 5'-triphosphate + 5'-deoxyadenosine + L-methionine + A + H(+)</text>
        <dbReference type="Rhea" id="RHEA:49576"/>
        <dbReference type="ChEBI" id="CHEBI:13193"/>
        <dbReference type="ChEBI" id="CHEBI:15378"/>
        <dbReference type="ChEBI" id="CHEBI:17319"/>
        <dbReference type="ChEBI" id="CHEBI:17499"/>
        <dbReference type="ChEBI" id="CHEBI:37565"/>
        <dbReference type="ChEBI" id="CHEBI:57844"/>
        <dbReference type="ChEBI" id="CHEBI:59789"/>
        <dbReference type="ChEBI" id="CHEBI:131766"/>
        <dbReference type="EC" id="4.1.99.22"/>
    </reaction>
</comment>
<comment type="cofactor">
    <cofactor evidence="1">
        <name>[4Fe-4S] cluster</name>
        <dbReference type="ChEBI" id="CHEBI:49883"/>
    </cofactor>
    <text evidence="1">Binds 2 [4Fe-4S] clusters. Binds 1 [4Fe-4S] cluster coordinated with 3 cysteines and an exchangeable S-adenosyl-L-methionine and 1 [4Fe-4S] cluster coordinated with 3 cysteines and the GTP-derived substrate.</text>
</comment>
<comment type="pathway">
    <text evidence="1">Cofactor biosynthesis; molybdopterin biosynthesis.</text>
</comment>
<comment type="subunit">
    <text evidence="1">Monomer and homodimer.</text>
</comment>
<comment type="similarity">
    <text evidence="1">Belongs to the radical SAM superfamily. MoaA family.</text>
</comment>
<gene>
    <name evidence="1" type="primary">moaA</name>
    <name type="ordered locus">STY0836</name>
    <name type="ordered locus">t2085</name>
</gene>
<sequence length="329" mass="37002">MASQLTDAFARKFYYLRLSITDVCNFRCTYCLPDGYKPGGVTNNGFLTVDEIRRVTRAFASLGTEKVRLTGGEPSLRRDFTDIIAAVGENDAIRQIAVTTNGYRLARDAANWREAGLTGVNVSVDSLDARQFHAITGQDKFRQVMAGIDAAFDAGFEKVKVNTVLMRDVNHHQLDTFLAWIQPRPIQLRFIELMETGEGSDLFRKHHISGQVLRDELIKRGWIHQLRQRSDGPAQVFCHPDYAGEIGLIMPYEKDFCATCNRLRVSSVGKLHLCLFGDGGVSLRDLLQDDAQQYALEERISDALREKKQTHFLHQSNTGITQNLSYIGG</sequence>
<name>MOAA_SALTI</name>
<dbReference type="EC" id="4.1.99.22" evidence="1"/>
<dbReference type="EMBL" id="AL513382">
    <property type="protein sequence ID" value="CAD05250.1"/>
    <property type="molecule type" value="Genomic_DNA"/>
</dbReference>
<dbReference type="EMBL" id="AE014613">
    <property type="protein sequence ID" value="AAO69703.1"/>
    <property type="molecule type" value="Genomic_DNA"/>
</dbReference>
<dbReference type="RefSeq" id="NP_455343.1">
    <property type="nucleotide sequence ID" value="NC_003198.1"/>
</dbReference>
<dbReference type="RefSeq" id="WP_000168180.1">
    <property type="nucleotide sequence ID" value="NZ_WSUR01000021.1"/>
</dbReference>
<dbReference type="SMR" id="P65387"/>
<dbReference type="STRING" id="220341.gene:17584840"/>
<dbReference type="KEGG" id="stt:t2085"/>
<dbReference type="KEGG" id="sty:STY0836"/>
<dbReference type="PATRIC" id="fig|220341.7.peg.841"/>
<dbReference type="eggNOG" id="COG2896">
    <property type="taxonomic scope" value="Bacteria"/>
</dbReference>
<dbReference type="HOGENOM" id="CLU_009273_0_1_6"/>
<dbReference type="OMA" id="QMSECFC"/>
<dbReference type="OrthoDB" id="9763993at2"/>
<dbReference type="UniPathway" id="UPA00344"/>
<dbReference type="Proteomes" id="UP000000541">
    <property type="component" value="Chromosome"/>
</dbReference>
<dbReference type="Proteomes" id="UP000002670">
    <property type="component" value="Chromosome"/>
</dbReference>
<dbReference type="GO" id="GO:0051539">
    <property type="term" value="F:4 iron, 4 sulfur cluster binding"/>
    <property type="evidence" value="ECO:0007669"/>
    <property type="project" value="UniProtKB-UniRule"/>
</dbReference>
<dbReference type="GO" id="GO:0061799">
    <property type="term" value="F:cyclic pyranopterin monophosphate synthase activity"/>
    <property type="evidence" value="ECO:0007669"/>
    <property type="project" value="TreeGrafter"/>
</dbReference>
<dbReference type="GO" id="GO:0061798">
    <property type="term" value="F:GTP 3',8'-cyclase activity"/>
    <property type="evidence" value="ECO:0007669"/>
    <property type="project" value="UniProtKB-UniRule"/>
</dbReference>
<dbReference type="GO" id="GO:0005525">
    <property type="term" value="F:GTP binding"/>
    <property type="evidence" value="ECO:0007669"/>
    <property type="project" value="UniProtKB-UniRule"/>
</dbReference>
<dbReference type="GO" id="GO:0046872">
    <property type="term" value="F:metal ion binding"/>
    <property type="evidence" value="ECO:0007669"/>
    <property type="project" value="UniProtKB-KW"/>
</dbReference>
<dbReference type="GO" id="GO:1904047">
    <property type="term" value="F:S-adenosyl-L-methionine binding"/>
    <property type="evidence" value="ECO:0007669"/>
    <property type="project" value="UniProtKB-UniRule"/>
</dbReference>
<dbReference type="GO" id="GO:0006777">
    <property type="term" value="P:Mo-molybdopterin cofactor biosynthetic process"/>
    <property type="evidence" value="ECO:0007669"/>
    <property type="project" value="UniProtKB-UniRule"/>
</dbReference>
<dbReference type="CDD" id="cd01335">
    <property type="entry name" value="Radical_SAM"/>
    <property type="match status" value="1"/>
</dbReference>
<dbReference type="CDD" id="cd21117">
    <property type="entry name" value="Twitch_MoaA"/>
    <property type="match status" value="1"/>
</dbReference>
<dbReference type="FunFam" id="3.20.20.70:FF:000057">
    <property type="entry name" value="GTP 3',8-cyclase"/>
    <property type="match status" value="1"/>
</dbReference>
<dbReference type="Gene3D" id="3.20.20.70">
    <property type="entry name" value="Aldolase class I"/>
    <property type="match status" value="1"/>
</dbReference>
<dbReference type="HAMAP" id="MF_01225_B">
    <property type="entry name" value="MoaA_B"/>
    <property type="match status" value="1"/>
</dbReference>
<dbReference type="InterPro" id="IPR013785">
    <property type="entry name" value="Aldolase_TIM"/>
</dbReference>
<dbReference type="InterPro" id="IPR006638">
    <property type="entry name" value="Elp3/MiaA/NifB-like_rSAM"/>
</dbReference>
<dbReference type="InterPro" id="IPR013483">
    <property type="entry name" value="MoaA"/>
</dbReference>
<dbReference type="InterPro" id="IPR000385">
    <property type="entry name" value="MoaA_NifB_PqqE_Fe-S-bd_CS"/>
</dbReference>
<dbReference type="InterPro" id="IPR010505">
    <property type="entry name" value="MoaA_twitch"/>
</dbReference>
<dbReference type="InterPro" id="IPR050105">
    <property type="entry name" value="MoCo_biosynth_MoaA/MoaC"/>
</dbReference>
<dbReference type="InterPro" id="IPR007197">
    <property type="entry name" value="rSAM"/>
</dbReference>
<dbReference type="NCBIfam" id="TIGR02666">
    <property type="entry name" value="moaA"/>
    <property type="match status" value="1"/>
</dbReference>
<dbReference type="PANTHER" id="PTHR22960:SF28">
    <property type="entry name" value="GTP 3',8-CYCLASE"/>
    <property type="match status" value="1"/>
</dbReference>
<dbReference type="PANTHER" id="PTHR22960">
    <property type="entry name" value="MOLYBDOPTERIN COFACTOR SYNTHESIS PROTEIN A"/>
    <property type="match status" value="1"/>
</dbReference>
<dbReference type="Pfam" id="PF06463">
    <property type="entry name" value="Mob_synth_C"/>
    <property type="match status" value="1"/>
</dbReference>
<dbReference type="Pfam" id="PF04055">
    <property type="entry name" value="Radical_SAM"/>
    <property type="match status" value="1"/>
</dbReference>
<dbReference type="SFLD" id="SFLDG01383">
    <property type="entry name" value="cyclic_pyranopterin_phosphate"/>
    <property type="match status" value="1"/>
</dbReference>
<dbReference type="SFLD" id="SFLDS00029">
    <property type="entry name" value="Radical_SAM"/>
    <property type="match status" value="1"/>
</dbReference>
<dbReference type="SMART" id="SM00729">
    <property type="entry name" value="Elp3"/>
    <property type="match status" value="1"/>
</dbReference>
<dbReference type="SUPFAM" id="SSF102114">
    <property type="entry name" value="Radical SAM enzymes"/>
    <property type="match status" value="1"/>
</dbReference>
<dbReference type="PROSITE" id="PS01305">
    <property type="entry name" value="MOAA_NIFB_PQQE"/>
    <property type="match status" value="1"/>
</dbReference>
<dbReference type="PROSITE" id="PS51918">
    <property type="entry name" value="RADICAL_SAM"/>
    <property type="match status" value="1"/>
</dbReference>
<accession>P65387</accession>
<accession>Q8XGT3</accession>
<keyword id="KW-0004">4Fe-4S</keyword>
<keyword id="KW-0342">GTP-binding</keyword>
<keyword id="KW-0408">Iron</keyword>
<keyword id="KW-0411">Iron-sulfur</keyword>
<keyword id="KW-0456">Lyase</keyword>
<keyword id="KW-0479">Metal-binding</keyword>
<keyword id="KW-0501">Molybdenum cofactor biosynthesis</keyword>
<keyword id="KW-0547">Nucleotide-binding</keyword>
<keyword id="KW-0949">S-adenosyl-L-methionine</keyword>
<protein>
    <recommendedName>
        <fullName evidence="1">GTP 3',8-cyclase</fullName>
        <ecNumber evidence="1">4.1.99.22</ecNumber>
    </recommendedName>
    <alternativeName>
        <fullName evidence="1">Molybdenum cofactor biosynthesis protein A</fullName>
    </alternativeName>
</protein>